<feature type="chain" id="PRO_0000358080" description="NADH-quinone oxidoreductase subunit C">
    <location>
        <begin position="1"/>
        <end position="214"/>
    </location>
</feature>
<evidence type="ECO:0000255" key="1">
    <source>
        <dbReference type="HAMAP-Rule" id="MF_01357"/>
    </source>
</evidence>
<proteinExistence type="inferred from homology"/>
<sequence length="214" mass="24375">MTDVVSTEAPALSPLEALGQAIVANSAGAITAWSVAFGELNLLGPANRIVQALTYLRDHPDYRFHQLVDLTGVDYPERERRFDVVYHLLSLIKNHRVRLKVQTDEDTAVPSVTPVFPVADWFEREAFDMYGIFFDGHPDLRRILTDYGFHGHPLRKDFPMTGYVEVRYDDELKRVVYEPVKITEFRAFDFLSPWEGAKYALPGDEKAEKRAGDA</sequence>
<keyword id="KW-0997">Cell inner membrane</keyword>
<keyword id="KW-1003">Cell membrane</keyword>
<keyword id="KW-0472">Membrane</keyword>
<keyword id="KW-0520">NAD</keyword>
<keyword id="KW-0874">Quinone</keyword>
<keyword id="KW-1278">Translocase</keyword>
<keyword id="KW-0813">Transport</keyword>
<keyword id="KW-0830">Ubiquinone</keyword>
<accession>B0SZ50</accession>
<organism>
    <name type="scientific">Caulobacter sp. (strain K31)</name>
    <dbReference type="NCBI Taxonomy" id="366602"/>
    <lineage>
        <taxon>Bacteria</taxon>
        <taxon>Pseudomonadati</taxon>
        <taxon>Pseudomonadota</taxon>
        <taxon>Alphaproteobacteria</taxon>
        <taxon>Caulobacterales</taxon>
        <taxon>Caulobacteraceae</taxon>
        <taxon>Caulobacter</taxon>
    </lineage>
</organism>
<gene>
    <name evidence="1" type="primary">nuoC</name>
    <name type="ordered locus">Caul_2834</name>
</gene>
<dbReference type="EC" id="7.1.1.-" evidence="1"/>
<dbReference type="EMBL" id="CP000927">
    <property type="protein sequence ID" value="ABZ71961.1"/>
    <property type="molecule type" value="Genomic_DNA"/>
</dbReference>
<dbReference type="SMR" id="B0SZ50"/>
<dbReference type="STRING" id="366602.Caul_2834"/>
<dbReference type="KEGG" id="cak:Caul_2834"/>
<dbReference type="eggNOG" id="COG0852">
    <property type="taxonomic scope" value="Bacteria"/>
</dbReference>
<dbReference type="HOGENOM" id="CLU_042628_2_1_5"/>
<dbReference type="OrthoDB" id="9803286at2"/>
<dbReference type="GO" id="GO:0005886">
    <property type="term" value="C:plasma membrane"/>
    <property type="evidence" value="ECO:0007669"/>
    <property type="project" value="UniProtKB-SubCell"/>
</dbReference>
<dbReference type="GO" id="GO:0008137">
    <property type="term" value="F:NADH dehydrogenase (ubiquinone) activity"/>
    <property type="evidence" value="ECO:0007669"/>
    <property type="project" value="InterPro"/>
</dbReference>
<dbReference type="GO" id="GO:0050136">
    <property type="term" value="F:NADH:ubiquinone reductase (non-electrogenic) activity"/>
    <property type="evidence" value="ECO:0007669"/>
    <property type="project" value="UniProtKB-UniRule"/>
</dbReference>
<dbReference type="GO" id="GO:0048038">
    <property type="term" value="F:quinone binding"/>
    <property type="evidence" value="ECO:0007669"/>
    <property type="project" value="UniProtKB-KW"/>
</dbReference>
<dbReference type="Gene3D" id="3.30.460.80">
    <property type="entry name" value="NADH:ubiquinone oxidoreductase, 30kDa subunit"/>
    <property type="match status" value="1"/>
</dbReference>
<dbReference type="HAMAP" id="MF_01357">
    <property type="entry name" value="NDH1_NuoC"/>
    <property type="match status" value="1"/>
</dbReference>
<dbReference type="InterPro" id="IPR010218">
    <property type="entry name" value="NADH_DH_suC"/>
</dbReference>
<dbReference type="InterPro" id="IPR037232">
    <property type="entry name" value="NADH_quin_OxRdtase_su_C/D-like"/>
</dbReference>
<dbReference type="InterPro" id="IPR001268">
    <property type="entry name" value="NADH_UbQ_OxRdtase_30kDa_su"/>
</dbReference>
<dbReference type="InterPro" id="IPR020396">
    <property type="entry name" value="NADH_UbQ_OxRdtase_CS"/>
</dbReference>
<dbReference type="NCBIfam" id="TIGR01961">
    <property type="entry name" value="NuoC_fam"/>
    <property type="match status" value="1"/>
</dbReference>
<dbReference type="NCBIfam" id="NF004730">
    <property type="entry name" value="PRK06074.1-1"/>
    <property type="match status" value="1"/>
</dbReference>
<dbReference type="NCBIfam" id="NF004733">
    <property type="entry name" value="PRK06074.1-5"/>
    <property type="match status" value="1"/>
</dbReference>
<dbReference type="PANTHER" id="PTHR10884:SF14">
    <property type="entry name" value="NADH DEHYDROGENASE [UBIQUINONE] IRON-SULFUR PROTEIN 3, MITOCHONDRIAL"/>
    <property type="match status" value="1"/>
</dbReference>
<dbReference type="PANTHER" id="PTHR10884">
    <property type="entry name" value="NADH DEHYDROGENASE UBIQUINONE IRON-SULFUR PROTEIN 3"/>
    <property type="match status" value="1"/>
</dbReference>
<dbReference type="Pfam" id="PF00329">
    <property type="entry name" value="Complex1_30kDa"/>
    <property type="match status" value="1"/>
</dbReference>
<dbReference type="SUPFAM" id="SSF143243">
    <property type="entry name" value="Nqo5-like"/>
    <property type="match status" value="1"/>
</dbReference>
<dbReference type="PROSITE" id="PS00542">
    <property type="entry name" value="COMPLEX1_30K"/>
    <property type="match status" value="1"/>
</dbReference>
<protein>
    <recommendedName>
        <fullName evidence="1">NADH-quinone oxidoreductase subunit C</fullName>
        <ecNumber evidence="1">7.1.1.-</ecNumber>
    </recommendedName>
    <alternativeName>
        <fullName evidence="1">NADH dehydrogenase I subunit C</fullName>
    </alternativeName>
    <alternativeName>
        <fullName evidence="1">NDH-1 subunit C</fullName>
    </alternativeName>
</protein>
<comment type="function">
    <text evidence="1">NDH-1 shuttles electrons from NADH, via FMN and iron-sulfur (Fe-S) centers, to quinones in the respiratory chain. The immediate electron acceptor for the enzyme in this species is believed to be ubiquinone. Couples the redox reaction to proton translocation (for every two electrons transferred, four hydrogen ions are translocated across the cytoplasmic membrane), and thus conserves the redox energy in a proton gradient.</text>
</comment>
<comment type="catalytic activity">
    <reaction evidence="1">
        <text>a quinone + NADH + 5 H(+)(in) = a quinol + NAD(+) + 4 H(+)(out)</text>
        <dbReference type="Rhea" id="RHEA:57888"/>
        <dbReference type="ChEBI" id="CHEBI:15378"/>
        <dbReference type="ChEBI" id="CHEBI:24646"/>
        <dbReference type="ChEBI" id="CHEBI:57540"/>
        <dbReference type="ChEBI" id="CHEBI:57945"/>
        <dbReference type="ChEBI" id="CHEBI:132124"/>
    </reaction>
</comment>
<comment type="subunit">
    <text evidence="1">NDH-1 is composed of 14 different subunits. Subunits NuoB, C, D, E, F, and G constitute the peripheral sector of the complex.</text>
</comment>
<comment type="subcellular location">
    <subcellularLocation>
        <location evidence="1">Cell inner membrane</location>
        <topology evidence="1">Peripheral membrane protein</topology>
        <orientation evidence="1">Cytoplasmic side</orientation>
    </subcellularLocation>
</comment>
<comment type="similarity">
    <text evidence="1">Belongs to the complex I 30 kDa subunit family.</text>
</comment>
<name>NUOC_CAUSK</name>
<reference key="1">
    <citation type="submission" date="2008-01" db="EMBL/GenBank/DDBJ databases">
        <title>Complete sequence of chromosome of Caulobacter sp. K31.</title>
        <authorList>
            <consortium name="US DOE Joint Genome Institute"/>
            <person name="Copeland A."/>
            <person name="Lucas S."/>
            <person name="Lapidus A."/>
            <person name="Barry K."/>
            <person name="Glavina del Rio T."/>
            <person name="Dalin E."/>
            <person name="Tice H."/>
            <person name="Pitluck S."/>
            <person name="Bruce D."/>
            <person name="Goodwin L."/>
            <person name="Thompson L.S."/>
            <person name="Brettin T."/>
            <person name="Detter J.C."/>
            <person name="Han C."/>
            <person name="Schmutz J."/>
            <person name="Larimer F."/>
            <person name="Land M."/>
            <person name="Hauser L."/>
            <person name="Kyrpides N."/>
            <person name="Kim E."/>
            <person name="Stephens C."/>
            <person name="Richardson P."/>
        </authorList>
    </citation>
    <scope>NUCLEOTIDE SEQUENCE [LARGE SCALE GENOMIC DNA]</scope>
    <source>
        <strain>K31</strain>
    </source>
</reference>